<protein>
    <recommendedName>
        <fullName>Chlorophyll a-b binding protein 3, chloroplastic</fullName>
    </recommendedName>
    <alternativeName>
        <fullName>LHCII type I CAB-3</fullName>
        <shortName>LHCP</shortName>
    </alternativeName>
</protein>
<reference key="1">
    <citation type="journal article" date="1988" name="Nucleic Acids Res.">
        <title>Isolation, characterization and evolutionary relatedness of three members from the soybean multigene family encoding chlorophyll a/b binding proteins.</title>
        <authorList>
            <person name="Walling L.L."/>
            <person name="Chang Y.C."/>
            <person name="Demmin D.S."/>
            <person name="Holzer F.M."/>
        </authorList>
    </citation>
    <scope>NUCLEOTIDE SEQUENCE [GENOMIC DNA]</scope>
    <source>
        <strain>cv. Forrest</strain>
    </source>
</reference>
<gene>
    <name type="primary">CAB3</name>
</gene>
<proteinExistence type="inferred from homology"/>
<sequence length="263" mass="27862">MAAASSMALSSPSLAGKAVKLGPSAPEVGRVSMRKTVTKQVSSGSPWYGPDRVKYLGPFSGEPPSYLTGEFPGDYGWDTAGLSADPETFAKNRELEVIHSRWAMLGALGCVFPELLSRNGVKFGEAVWFKAGSQIFSEGGLDYLGNPSLIHAQSILAIWATQVILMGAVEGYRIAGGPLGEVTDPIYPGGSFDPLGLADDPEAFAELKVKELKNGRLAMFSMFGFFVQAIVTGKGPLENLADHLAGPVNNNAWAYATNFVPGK</sequence>
<organism>
    <name type="scientific">Glycine max</name>
    <name type="common">Soybean</name>
    <name type="synonym">Glycine hispida</name>
    <dbReference type="NCBI Taxonomy" id="3847"/>
    <lineage>
        <taxon>Eukaryota</taxon>
        <taxon>Viridiplantae</taxon>
        <taxon>Streptophyta</taxon>
        <taxon>Embryophyta</taxon>
        <taxon>Tracheophyta</taxon>
        <taxon>Spermatophyta</taxon>
        <taxon>Magnoliopsida</taxon>
        <taxon>eudicotyledons</taxon>
        <taxon>Gunneridae</taxon>
        <taxon>Pentapetalae</taxon>
        <taxon>rosids</taxon>
        <taxon>fabids</taxon>
        <taxon>Fabales</taxon>
        <taxon>Fabaceae</taxon>
        <taxon>Papilionoideae</taxon>
        <taxon>50 kb inversion clade</taxon>
        <taxon>NPAAA clade</taxon>
        <taxon>indigoferoid/millettioid clade</taxon>
        <taxon>Phaseoleae</taxon>
        <taxon>Glycine</taxon>
        <taxon>Glycine subgen. Soja</taxon>
    </lineage>
</organism>
<dbReference type="EMBL" id="X12981">
    <property type="protein sequence ID" value="CAA31419.1"/>
    <property type="molecule type" value="Genomic_DNA"/>
</dbReference>
<dbReference type="PIR" id="S01962">
    <property type="entry name" value="S01962"/>
</dbReference>
<dbReference type="SMR" id="P09756"/>
<dbReference type="FunCoup" id="P09756">
    <property type="interactions" value="1938"/>
</dbReference>
<dbReference type="STRING" id="3847.P09756"/>
<dbReference type="PaxDb" id="3847-GLYMA08G08770.2"/>
<dbReference type="eggNOG" id="ENOG502QPU1">
    <property type="taxonomic scope" value="Eukaryota"/>
</dbReference>
<dbReference type="InParanoid" id="P09756"/>
<dbReference type="Proteomes" id="UP000008827">
    <property type="component" value="Unplaced"/>
</dbReference>
<dbReference type="GO" id="GO:0009535">
    <property type="term" value="C:chloroplast thylakoid membrane"/>
    <property type="evidence" value="ECO:0000318"/>
    <property type="project" value="GO_Central"/>
</dbReference>
<dbReference type="GO" id="GO:0009522">
    <property type="term" value="C:photosystem I"/>
    <property type="evidence" value="ECO:0007669"/>
    <property type="project" value="UniProtKB-KW"/>
</dbReference>
<dbReference type="GO" id="GO:0009523">
    <property type="term" value="C:photosystem II"/>
    <property type="evidence" value="ECO:0007669"/>
    <property type="project" value="UniProtKB-KW"/>
</dbReference>
<dbReference type="GO" id="GO:0016168">
    <property type="term" value="F:chlorophyll binding"/>
    <property type="evidence" value="ECO:0007669"/>
    <property type="project" value="UniProtKB-KW"/>
</dbReference>
<dbReference type="GO" id="GO:0046872">
    <property type="term" value="F:metal ion binding"/>
    <property type="evidence" value="ECO:0007669"/>
    <property type="project" value="UniProtKB-KW"/>
</dbReference>
<dbReference type="GO" id="GO:0009768">
    <property type="term" value="P:photosynthesis, light harvesting in photosystem I"/>
    <property type="evidence" value="ECO:0000318"/>
    <property type="project" value="GO_Central"/>
</dbReference>
<dbReference type="GO" id="GO:0009416">
    <property type="term" value="P:response to light stimulus"/>
    <property type="evidence" value="ECO:0000318"/>
    <property type="project" value="GO_Central"/>
</dbReference>
<dbReference type="FunFam" id="1.10.3460.10:FF:000001">
    <property type="entry name" value="Chlorophyll a-b binding protein, chloroplastic"/>
    <property type="match status" value="1"/>
</dbReference>
<dbReference type="Gene3D" id="1.10.3460.10">
    <property type="entry name" value="Chlorophyll a/b binding protein domain"/>
    <property type="match status" value="1"/>
</dbReference>
<dbReference type="InterPro" id="IPR001344">
    <property type="entry name" value="Chloro_AB-bd_pln"/>
</dbReference>
<dbReference type="InterPro" id="IPR022796">
    <property type="entry name" value="Chloroa_b-bind"/>
</dbReference>
<dbReference type="PANTHER" id="PTHR21649">
    <property type="entry name" value="CHLOROPHYLL A/B BINDING PROTEIN"/>
    <property type="match status" value="1"/>
</dbReference>
<dbReference type="Pfam" id="PF00504">
    <property type="entry name" value="Chloroa_b-bind"/>
    <property type="match status" value="1"/>
</dbReference>
<dbReference type="SUPFAM" id="SSF103511">
    <property type="entry name" value="Chlorophyll a-b binding protein"/>
    <property type="match status" value="1"/>
</dbReference>
<name>CB23_SOYBN</name>
<feature type="transit peptide" description="Chloroplast" evidence="5">
    <location>
        <begin position="1"/>
        <end position="33"/>
    </location>
</feature>
<feature type="chain" id="PRO_0000003699" description="Chlorophyll a-b binding protein 3, chloroplastic">
    <location>
        <begin position="34"/>
        <end position="263"/>
    </location>
</feature>
<feature type="transmembrane region" description="Helical" evidence="4">
    <location>
        <begin position="97"/>
        <end position="117"/>
    </location>
</feature>
<feature type="transmembrane region" description="Helical" evidence="4">
    <location>
        <begin position="149"/>
        <end position="169"/>
    </location>
</feature>
<feature type="transmembrane region" description="Helical" evidence="4">
    <location>
        <begin position="217"/>
        <end position="237"/>
    </location>
</feature>
<feature type="binding site" description="axial binding residue" evidence="3">
    <location>
        <position position="55"/>
    </location>
    <ligand>
        <name>chlorophyll b</name>
        <dbReference type="ChEBI" id="CHEBI:61721"/>
        <label>1</label>
    </ligand>
    <ligandPart>
        <name>Mg</name>
        <dbReference type="ChEBI" id="CHEBI:25107"/>
    </ligandPart>
</feature>
<feature type="binding site" evidence="1">
    <location>
        <position position="77"/>
    </location>
    <ligand>
        <name>chlorophyll a</name>
        <dbReference type="ChEBI" id="CHEBI:58416"/>
        <label>1</label>
    </ligand>
</feature>
<feature type="binding site" evidence="1">
    <location>
        <position position="83"/>
    </location>
    <ligand>
        <name>chlorophyll a</name>
        <dbReference type="ChEBI" id="CHEBI:58416"/>
        <label>1</label>
    </ligand>
</feature>
<feature type="binding site" description="axial binding residue" evidence="3">
    <location>
        <position position="96"/>
    </location>
    <ligand>
        <name>chlorophyll a</name>
        <dbReference type="ChEBI" id="CHEBI:58416"/>
        <label>1</label>
    </ligand>
    <ligandPart>
        <name>Mg</name>
        <dbReference type="ChEBI" id="CHEBI:25107"/>
    </ligandPart>
</feature>
<feature type="binding site" description="axial binding residue" evidence="3">
    <location>
        <position position="99"/>
    </location>
    <ligand>
        <name>chlorophyll a</name>
        <dbReference type="ChEBI" id="CHEBI:58416"/>
        <label>2</label>
    </ligand>
    <ligandPart>
        <name>Mg</name>
        <dbReference type="ChEBI" id="CHEBI:25107"/>
    </ligandPart>
</feature>
<feature type="binding site" evidence="1">
    <location>
        <position position="101"/>
    </location>
    <ligand>
        <name>chlorophyll b</name>
        <dbReference type="ChEBI" id="CHEBI:61721"/>
        <label>2</label>
    </ligand>
</feature>
<feature type="binding site" evidence="1">
    <location>
        <position position="134"/>
    </location>
    <ligand>
        <name>chlorophyll a</name>
        <dbReference type="ChEBI" id="CHEBI:58416"/>
        <label>3</label>
    </ligand>
</feature>
<feature type="binding site" evidence="1">
    <location>
        <position position="144"/>
    </location>
    <ligand>
        <name>chlorophyll a</name>
        <dbReference type="ChEBI" id="CHEBI:58416"/>
        <label>3</label>
    </ligand>
</feature>
<feature type="binding site" description="axial binding residue" evidence="1">
    <location>
        <position position="150"/>
    </location>
    <ligand>
        <name>chlorophyll b</name>
        <dbReference type="ChEBI" id="CHEBI:61721"/>
        <label>2</label>
    </ligand>
    <ligandPart>
        <name>Mg</name>
        <dbReference type="ChEBI" id="CHEBI:25107"/>
    </ligandPart>
</feature>
<feature type="binding site" evidence="1">
    <location>
        <position position="154"/>
    </location>
    <ligand>
        <name>chlorophyll b</name>
        <dbReference type="ChEBI" id="CHEBI:61721"/>
        <label>3</label>
    </ligand>
</feature>
<feature type="binding site" evidence="1">
    <location>
        <position position="162"/>
    </location>
    <ligand>
        <name>chlorophyll b</name>
        <dbReference type="ChEBI" id="CHEBI:61721"/>
        <label>4</label>
    </ligand>
</feature>
<feature type="binding site" evidence="2">
    <location>
        <position position="162"/>
    </location>
    <ligand>
        <name>chlorophyll b</name>
        <dbReference type="ChEBI" id="CHEBI:61721"/>
        <label>5</label>
    </ligand>
</feature>
<feature type="binding site" description="axial binding residue" evidence="3">
    <location>
        <position position="170"/>
    </location>
    <ligand>
        <name>chlorophyll b</name>
        <dbReference type="ChEBI" id="CHEBI:61721"/>
        <label>3</label>
    </ligand>
    <ligandPart>
        <name>Mg</name>
        <dbReference type="ChEBI" id="CHEBI:25107"/>
    </ligandPart>
</feature>
<feature type="binding site" evidence="1">
    <location>
        <position position="173"/>
    </location>
    <ligand>
        <name>chlorophyll b</name>
        <dbReference type="ChEBI" id="CHEBI:61721"/>
        <label>4</label>
    </ligand>
</feature>
<feature type="binding site" evidence="1">
    <location>
        <position position="179"/>
    </location>
    <ligand>
        <name>chlorophyll b</name>
        <dbReference type="ChEBI" id="CHEBI:61721"/>
        <label>2</label>
    </ligand>
</feature>
<feature type="binding site" evidence="1">
    <location>
        <position position="210"/>
    </location>
    <ligand>
        <name>chlorophyll a</name>
        <dbReference type="ChEBI" id="CHEBI:58416"/>
        <label>5</label>
    </ligand>
</feature>
<feature type="binding site" description="axial binding residue" evidence="3">
    <location>
        <position position="211"/>
    </location>
    <ligand>
        <name>chlorophyll a</name>
        <dbReference type="ChEBI" id="CHEBI:58416"/>
        <label>3</label>
    </ligand>
    <ligandPart>
        <name>Mg</name>
        <dbReference type="ChEBI" id="CHEBI:25107"/>
    </ligandPart>
</feature>
<feature type="binding site" description="axial binding residue" evidence="3">
    <location>
        <position position="214"/>
    </location>
    <ligand>
        <name>chlorophyll a</name>
        <dbReference type="ChEBI" id="CHEBI:58416"/>
        <label>4</label>
    </ligand>
    <ligandPart>
        <name>Mg</name>
        <dbReference type="ChEBI" id="CHEBI:25107"/>
    </ligandPart>
</feature>
<feature type="binding site" evidence="1">
    <location>
        <position position="216"/>
    </location>
    <ligand>
        <name>chlorophyll a</name>
        <dbReference type="ChEBI" id="CHEBI:58416"/>
        <label>1</label>
    </ligand>
</feature>
<feature type="binding site" description="axial binding residue" evidence="3">
    <location>
        <position position="228"/>
    </location>
    <ligand>
        <name>chlorophyll a</name>
        <dbReference type="ChEBI" id="CHEBI:58416"/>
        <label>5</label>
    </ligand>
    <ligandPart>
        <name>Mg</name>
        <dbReference type="ChEBI" id="CHEBI:25107"/>
    </ligandPart>
</feature>
<feature type="binding site" description="axial binding residue" evidence="3">
    <location>
        <position position="243"/>
    </location>
    <ligand>
        <name>chlorophyll a</name>
        <dbReference type="ChEBI" id="CHEBI:58416"/>
        <label>6</label>
    </ligand>
    <ligandPart>
        <name>Mg</name>
        <dbReference type="ChEBI" id="CHEBI:25107"/>
    </ligandPart>
</feature>
<feature type="binding site" evidence="1">
    <location>
        <position position="252"/>
    </location>
    <ligand>
        <name>chlorophyll a</name>
        <dbReference type="ChEBI" id="CHEBI:58416"/>
        <label>6</label>
    </ligand>
</feature>
<feature type="binding site" evidence="1">
    <location>
        <position position="259"/>
    </location>
    <ligand>
        <name>chlorophyll b</name>
        <dbReference type="ChEBI" id="CHEBI:61721"/>
        <label>5</label>
    </ligand>
</feature>
<feature type="modified residue" description="N2-acetylarginine" evidence="1">
    <location>
        <position position="34"/>
    </location>
</feature>
<feature type="modified residue" description="Phosphothreonine" evidence="1">
    <location>
        <position position="36"/>
    </location>
</feature>
<keyword id="KW-0007">Acetylation</keyword>
<keyword id="KW-0148">Chlorophyll</keyword>
<keyword id="KW-0150">Chloroplast</keyword>
<keyword id="KW-0157">Chromophore</keyword>
<keyword id="KW-0460">Magnesium</keyword>
<keyword id="KW-0472">Membrane</keyword>
<keyword id="KW-0479">Metal-binding</keyword>
<keyword id="KW-0597">Phosphoprotein</keyword>
<keyword id="KW-0602">Photosynthesis</keyword>
<keyword id="KW-0603">Photosystem I</keyword>
<keyword id="KW-0604">Photosystem II</keyword>
<keyword id="KW-0934">Plastid</keyword>
<keyword id="KW-1185">Reference proteome</keyword>
<keyword id="KW-0793">Thylakoid</keyword>
<keyword id="KW-0809">Transit peptide</keyword>
<keyword id="KW-0812">Transmembrane</keyword>
<keyword id="KW-1133">Transmembrane helix</keyword>
<evidence type="ECO:0000250" key="1"/>
<evidence type="ECO:0000250" key="2">
    <source>
        <dbReference type="UniProtKB" id="P07371"/>
    </source>
</evidence>
<evidence type="ECO:0000250" key="3">
    <source>
        <dbReference type="UniProtKB" id="P12333"/>
    </source>
</evidence>
<evidence type="ECO:0000255" key="4"/>
<evidence type="ECO:0000305" key="5"/>
<accession>P09756</accession>
<comment type="function">
    <text>The light-harvesting complex (LHC) functions as a light receptor, it captures and delivers excitation energy to photosystems with which it is closely associated.</text>
</comment>
<comment type="cofactor">
    <text evidence="1">Binds at least 14 chlorophylls (8 Chl-a and 6 Chl-b) and carotenoids such as lutein and neoxanthin.</text>
</comment>
<comment type="subunit">
    <text>The LHC complex consists of chlorophyll a-b binding proteins.</text>
</comment>
<comment type="subcellular location">
    <subcellularLocation>
        <location>Plastid</location>
        <location>Chloroplast thylakoid membrane</location>
        <topology>Multi-pass membrane protein</topology>
    </subcellularLocation>
</comment>
<comment type="domain">
    <text>The N-terminus of the protein extends into the stroma where it is involved with adhesion of granal membranes and post-translational modifications; both are believed to mediate the distribution of excitation energy between photosystems I and II.</text>
</comment>
<comment type="PTM">
    <text evidence="1">Photoregulated by reversible phosphorylation of its threonine residues.</text>
</comment>
<comment type="similarity">
    <text evidence="5">Belongs to the light-harvesting chlorophyll a/b-binding (LHC) protein family.</text>
</comment>